<keyword id="KW-0010">Activator</keyword>
<keyword id="KW-0025">Alternative splicing</keyword>
<keyword id="KW-1268">Autism spectrum disorder</keyword>
<keyword id="KW-0225">Disease variant</keyword>
<keyword id="KW-0991">Intellectual disability</keyword>
<keyword id="KW-0539">Nucleus</keyword>
<keyword id="KW-0597">Phosphoprotein</keyword>
<keyword id="KW-1267">Proteomics identification</keyword>
<keyword id="KW-1185">Reference proteome</keyword>
<keyword id="KW-0678">Repressor</keyword>
<keyword id="KW-0804">Transcription</keyword>
<keyword id="KW-0805">Transcription regulation</keyword>
<dbReference type="EMBL" id="AF388364">
    <property type="protein sequence ID" value="AAL09579.1"/>
    <property type="molecule type" value="mRNA"/>
</dbReference>
<dbReference type="EMBL" id="AF388365">
    <property type="protein sequence ID" value="AAL09580.1"/>
    <property type="molecule type" value="mRNA"/>
</dbReference>
<dbReference type="EMBL" id="AF399708">
    <property type="protein sequence ID" value="AAO38813.1"/>
    <property type="molecule type" value="mRNA"/>
</dbReference>
<dbReference type="EMBL" id="CH471052">
    <property type="protein sequence ID" value="EAW78800.1"/>
    <property type="molecule type" value="Genomic_DNA"/>
</dbReference>
<dbReference type="EMBL" id="AB046855">
    <property type="protein sequence ID" value="BAB13461.1"/>
    <property type="molecule type" value="mRNA"/>
</dbReference>
<dbReference type="EMBL" id="AK022714">
    <property type="protein sequence ID" value="BAB14198.1"/>
    <property type="status" value="ALT_INIT"/>
    <property type="molecule type" value="mRNA"/>
</dbReference>
<dbReference type="EMBL" id="AF090917">
    <property type="protein sequence ID" value="AAF24035.1"/>
    <property type="status" value="ALT_SEQ"/>
    <property type="molecule type" value="mRNA"/>
</dbReference>
<dbReference type="CCDS" id="CCDS33876.1">
    <molecule id="Q86YW9-1"/>
</dbReference>
<dbReference type="RefSeq" id="NP_443728.3">
    <molecule id="Q86YW9-1"/>
    <property type="nucleotide sequence ID" value="NM_053002.5"/>
</dbReference>
<dbReference type="RefSeq" id="XP_011510692.1">
    <property type="nucleotide sequence ID" value="XM_011512390.2"/>
</dbReference>
<dbReference type="RefSeq" id="XP_047303363.1">
    <molecule id="Q86YW9-1"/>
    <property type="nucleotide sequence ID" value="XM_047447407.1"/>
</dbReference>
<dbReference type="RefSeq" id="XP_047303364.1">
    <molecule id="Q86YW9-4"/>
    <property type="nucleotide sequence ID" value="XM_047447408.1"/>
</dbReference>
<dbReference type="RefSeq" id="XP_054201124.1">
    <molecule id="Q86YW9-1"/>
    <property type="nucleotide sequence ID" value="XM_054345149.1"/>
</dbReference>
<dbReference type="RefSeq" id="XP_054201125.1">
    <molecule id="Q86YW9-4"/>
    <property type="nucleotide sequence ID" value="XM_054345150.1"/>
</dbReference>
<dbReference type="SMR" id="Q86YW9"/>
<dbReference type="BioGRID" id="125538">
    <property type="interactions" value="45"/>
</dbReference>
<dbReference type="FunCoup" id="Q86YW9">
    <property type="interactions" value="403"/>
</dbReference>
<dbReference type="IntAct" id="Q86YW9">
    <property type="interactions" value="34"/>
</dbReference>
<dbReference type="MINT" id="Q86YW9"/>
<dbReference type="STRING" id="9606.ENSP00000417235"/>
<dbReference type="GlyGen" id="Q86YW9">
    <property type="glycosylation" value="1 site, 1 O-linked glycan (1 site)"/>
</dbReference>
<dbReference type="iPTMnet" id="Q86YW9"/>
<dbReference type="PhosphoSitePlus" id="Q86YW9"/>
<dbReference type="BioMuta" id="MED12L"/>
<dbReference type="DMDM" id="166232934"/>
<dbReference type="jPOST" id="Q86YW9"/>
<dbReference type="MassIVE" id="Q86YW9"/>
<dbReference type="PaxDb" id="9606-ENSP00000417235"/>
<dbReference type="PeptideAtlas" id="Q86YW9"/>
<dbReference type="ProteomicsDB" id="70486">
    <molecule id="Q86YW9-1"/>
</dbReference>
<dbReference type="ProteomicsDB" id="70487">
    <molecule id="Q86YW9-2"/>
</dbReference>
<dbReference type="ProteomicsDB" id="70488">
    <molecule id="Q86YW9-3"/>
</dbReference>
<dbReference type="ProteomicsDB" id="70489">
    <molecule id="Q86YW9-4"/>
</dbReference>
<dbReference type="Antibodypedia" id="46744">
    <property type="antibodies" value="21 antibodies from 14 providers"/>
</dbReference>
<dbReference type="DNASU" id="116931"/>
<dbReference type="Ensembl" id="ENST00000309237.8">
    <molecule id="Q86YW9-3"/>
    <property type="protein sequence ID" value="ENSP00000310760.4"/>
    <property type="gene ID" value="ENSG00000144893.13"/>
</dbReference>
<dbReference type="Ensembl" id="ENST00000422248.6">
    <molecule id="Q86YW9-2"/>
    <property type="protein sequence ID" value="ENSP00000403308.2"/>
    <property type="gene ID" value="ENSG00000144893.13"/>
</dbReference>
<dbReference type="Ensembl" id="ENST00000474524.5">
    <molecule id="Q86YW9-1"/>
    <property type="protein sequence ID" value="ENSP00000417235.1"/>
    <property type="gene ID" value="ENSG00000144893.13"/>
</dbReference>
<dbReference type="GeneID" id="116931"/>
<dbReference type="KEGG" id="hsa:116931"/>
<dbReference type="UCSC" id="uc003eyn.3">
    <molecule id="Q86YW9-1"/>
    <property type="organism name" value="human"/>
</dbReference>
<dbReference type="AGR" id="HGNC:16050"/>
<dbReference type="CTD" id="116931"/>
<dbReference type="DisGeNET" id="116931"/>
<dbReference type="GeneCards" id="MED12L"/>
<dbReference type="HGNC" id="HGNC:16050">
    <property type="gene designation" value="MED12L"/>
</dbReference>
<dbReference type="HPA" id="ENSG00000144893">
    <property type="expression patterns" value="Tissue enhanced (bone marrow, testis)"/>
</dbReference>
<dbReference type="MalaCards" id="MED12L"/>
<dbReference type="MIM" id="611318">
    <property type="type" value="gene"/>
</dbReference>
<dbReference type="MIM" id="618872">
    <property type="type" value="phenotype"/>
</dbReference>
<dbReference type="neXtProt" id="NX_Q86YW9"/>
<dbReference type="OpenTargets" id="ENSG00000144893"/>
<dbReference type="Orphanet" id="178469">
    <property type="disease" value="Autosomal dominant non-syndromic intellectual disability"/>
</dbReference>
<dbReference type="PharmGKB" id="PA134884590"/>
<dbReference type="VEuPathDB" id="HostDB:ENSG00000144893"/>
<dbReference type="eggNOG" id="KOG3598">
    <property type="taxonomic scope" value="Eukaryota"/>
</dbReference>
<dbReference type="GeneTree" id="ENSGT00440000037505"/>
<dbReference type="HOGENOM" id="CLU_383529_0_0_1"/>
<dbReference type="InParanoid" id="Q86YW9"/>
<dbReference type="OMA" id="IWIASQN"/>
<dbReference type="OrthoDB" id="20828at2759"/>
<dbReference type="PAN-GO" id="Q86YW9">
    <property type="GO annotations" value="4 GO annotations based on evolutionary models"/>
</dbReference>
<dbReference type="PhylomeDB" id="Q86YW9"/>
<dbReference type="TreeFam" id="TF324178"/>
<dbReference type="PathwayCommons" id="Q86YW9"/>
<dbReference type="SignaLink" id="Q86YW9"/>
<dbReference type="BioGRID-ORCS" id="116931">
    <property type="hits" value="12 hits in 1150 CRISPR screens"/>
</dbReference>
<dbReference type="ChiTaRS" id="MED12L">
    <property type="organism name" value="human"/>
</dbReference>
<dbReference type="GenomeRNAi" id="116931"/>
<dbReference type="Pharos" id="Q86YW9">
    <property type="development level" value="Tdark"/>
</dbReference>
<dbReference type="PRO" id="PR:Q86YW9"/>
<dbReference type="Proteomes" id="UP000005640">
    <property type="component" value="Chromosome 3"/>
</dbReference>
<dbReference type="RNAct" id="Q86YW9">
    <property type="molecule type" value="protein"/>
</dbReference>
<dbReference type="Bgee" id="ENSG00000144893">
    <property type="expression patterns" value="Expressed in monocyte and 103 other cell types or tissues"/>
</dbReference>
<dbReference type="ExpressionAtlas" id="Q86YW9">
    <property type="expression patterns" value="baseline and differential"/>
</dbReference>
<dbReference type="GO" id="GO:0016592">
    <property type="term" value="C:mediator complex"/>
    <property type="evidence" value="ECO:0000318"/>
    <property type="project" value="GO_Central"/>
</dbReference>
<dbReference type="GO" id="GO:0008013">
    <property type="term" value="F:beta-catenin binding"/>
    <property type="evidence" value="ECO:0007669"/>
    <property type="project" value="InterPro"/>
</dbReference>
<dbReference type="GO" id="GO:0003713">
    <property type="term" value="F:transcription coactivator activity"/>
    <property type="evidence" value="ECO:0000318"/>
    <property type="project" value="GO_Central"/>
</dbReference>
<dbReference type="GO" id="GO:0045944">
    <property type="term" value="P:positive regulation of transcription by RNA polymerase II"/>
    <property type="evidence" value="ECO:0000318"/>
    <property type="project" value="GO_Central"/>
</dbReference>
<dbReference type="InterPro" id="IPR051647">
    <property type="entry name" value="Mediator_comp_sub12"/>
</dbReference>
<dbReference type="InterPro" id="IPR019035">
    <property type="entry name" value="Mediator_Med12"/>
</dbReference>
<dbReference type="InterPro" id="IPR021989">
    <property type="entry name" value="Mediator_Med12_catenin-bd"/>
</dbReference>
<dbReference type="InterPro" id="IPR021990">
    <property type="entry name" value="Mediator_Med12_LCEWAV"/>
</dbReference>
<dbReference type="PANTHER" id="PTHR46007">
    <property type="entry name" value="MEDIATOR OF RNA POLYMERASE II TRANSCRIPTION SUBUNIT 12"/>
    <property type="match status" value="1"/>
</dbReference>
<dbReference type="PANTHER" id="PTHR46007:SF3">
    <property type="entry name" value="MEDIATOR OF RNA POLYMERASE II TRANSCRIPTION SUBUNIT 12-LIKE PROTEIN"/>
    <property type="match status" value="1"/>
</dbReference>
<dbReference type="Pfam" id="PF09497">
    <property type="entry name" value="Med12"/>
    <property type="match status" value="1"/>
</dbReference>
<dbReference type="Pfam" id="PF12145">
    <property type="entry name" value="Med12-LCEWAV"/>
    <property type="match status" value="1"/>
</dbReference>
<dbReference type="Pfam" id="PF12144">
    <property type="entry name" value="Med12-PQL"/>
    <property type="match status" value="1"/>
</dbReference>
<dbReference type="SMART" id="SM01281">
    <property type="entry name" value="Med12"/>
    <property type="match status" value="1"/>
</dbReference>
<feature type="chain" id="PRO_0000313053" description="Mediator of RNA polymerase II transcription subunit 12-like protein">
    <location>
        <begin position="1"/>
        <end position="2145"/>
    </location>
</feature>
<feature type="region of interest" description="Disordered" evidence="2">
    <location>
        <begin position="1"/>
        <end position="30"/>
    </location>
</feature>
<feature type="region of interest" description="Disordered" evidence="2">
    <location>
        <begin position="1436"/>
        <end position="1460"/>
    </location>
</feature>
<feature type="region of interest" description="Disordered" evidence="2">
    <location>
        <begin position="1721"/>
        <end position="1802"/>
    </location>
</feature>
<feature type="region of interest" description="Disordered" evidence="2">
    <location>
        <begin position="2029"/>
        <end position="2145"/>
    </location>
</feature>
<feature type="compositionally biased region" description="Basic and acidic residues" evidence="2">
    <location>
        <begin position="1436"/>
        <end position="1455"/>
    </location>
</feature>
<feature type="compositionally biased region" description="Basic residues" evidence="2">
    <location>
        <begin position="1768"/>
        <end position="1777"/>
    </location>
</feature>
<feature type="compositionally biased region" description="Low complexity" evidence="2">
    <location>
        <begin position="2052"/>
        <end position="2069"/>
    </location>
</feature>
<feature type="compositionally biased region" description="Pro residues" evidence="2">
    <location>
        <begin position="2070"/>
        <end position="2079"/>
    </location>
</feature>
<feature type="compositionally biased region" description="Polar residues" evidence="2">
    <location>
        <begin position="2089"/>
        <end position="2099"/>
    </location>
</feature>
<feature type="compositionally biased region" description="Low complexity" evidence="2">
    <location>
        <begin position="2104"/>
        <end position="2124"/>
    </location>
</feature>
<feature type="compositionally biased region" description="Polar residues" evidence="2">
    <location>
        <begin position="2125"/>
        <end position="2136"/>
    </location>
</feature>
<feature type="modified residue" description="Phosphothreonine" evidence="8">
    <location>
        <position position="462"/>
    </location>
</feature>
<feature type="splice variant" id="VSP_029994" description="In isoform 3." evidence="5">
    <original>E</original>
    <variation>EEQSIMAHMGIDSGTTNIFDEVDKSDFKTDFGSEFP</variation>
    <location>
        <position position="656"/>
    </location>
</feature>
<feature type="splice variant" id="VSP_029995" description="In isoform 2 and isoform 3." evidence="5">
    <original>DESSSH</original>
    <variation>VSHCFS</variation>
    <location>
        <begin position="716"/>
        <end position="721"/>
    </location>
</feature>
<feature type="splice variant" id="VSP_029996" description="In isoform 2 and isoform 3." evidence="5">
    <location>
        <begin position="722"/>
        <end position="2145"/>
    </location>
</feature>
<feature type="splice variant" id="VSP_029997" description="In isoform 4." evidence="6">
    <location>
        <position position="951"/>
    </location>
</feature>
<feature type="sequence variant" id="VAR_037647" description="In dbSNP:rs17290219.">
    <original>Q</original>
    <variation>P</variation>
    <location>
        <position position="401"/>
    </location>
</feature>
<feature type="sequence variant" id="VAR_037648" description="In dbSNP:rs3108728.">
    <original>E</original>
    <variation>K</variation>
    <location>
        <position position="464"/>
    </location>
</feature>
<feature type="sequence variant" id="VAR_037649" description="In dbSNP:rs2131100.">
    <original>Q</original>
    <variation>H</variation>
    <location>
        <position position="903"/>
    </location>
</feature>
<feature type="sequence variant" id="VAR_037650" description="In dbSNP:rs3732765.">
    <original>R</original>
    <variation>Q</variation>
    <location>
        <position position="1210"/>
    </location>
</feature>
<feature type="sequence variant" id="VAR_089563" description="In NIZIDS." evidence="4">
    <location>
        <begin position="1366"/>
        <end position="1383"/>
    </location>
</feature>
<feature type="sequence variant" id="VAR_037651" description="In dbSNP:rs2276761.">
    <original>R</original>
    <variation>Q</variation>
    <location>
        <position position="1698"/>
    </location>
</feature>
<feature type="sequence variant" id="VAR_084189" description="In NIZIDS." evidence="3">
    <location>
        <begin position="1998"/>
        <end position="2145"/>
    </location>
</feature>
<feature type="sequence conflict" description="In Ref. 5; BAB14198." evidence="7" ref="5">
    <original>I</original>
    <variation>T</variation>
    <location>
        <position position="1088"/>
    </location>
</feature>
<accession>Q86YW9</accession>
<accession>Q96PC7</accession>
<accession>Q96PC8</accession>
<accession>Q9H9M5</accession>
<accession>Q9HCD7</accession>
<accession>Q9UI69</accession>
<comment type="function">
    <text evidence="1">May be a component of the Mediator complex, a coactivator involved in the regulated transcription of nearly all RNA polymerase II-dependent genes. Mediator functions as a bridge to convey information from gene-specific regulatory proteins to the basal RNA polymerase II transcription machinery. Mediator is recruited to promoters by direct interactions with regulatory proteins and serves as a scaffold for the assembly of a functional preinitiation complex with RNA polymerase II and the general transcription factors (By similarity).</text>
</comment>
<comment type="subunit">
    <text evidence="1">May be a component of the Mediator complex, which is known to be composed of MED1, MED4, MED6, MED7, MED8, MED9, MED10, MED11, MED12, MED13, MED13L, MED14, MED15, MED16, MED17, MED18, MED19, MED20, MED21, MED22, MED23, MED24, MED25, MED26, MED27, MED29, MED30, MED31, CCNC, CDK8 and CDC2L6/CDK11. The MED12, MED13, CCNC and CDK8 subunits form a distinct module termed the CDK8 module. Mediator containing the CDK8 module is less active than Mediator lacking this module in supporting transcriptional activation. Individual preparations of the Mediator complex lacking one or more distinct subunits have been variously termed ARC, CRSP, DRIP, PC2, SMCC and TRAP (By similarity).</text>
</comment>
<comment type="interaction">
    <interactant intactId="EBI-3957138">
        <id>Q86YW9</id>
    </interactant>
    <interactant intactId="EBI-456371">
        <id>P61024</id>
        <label>CKS1B</label>
    </interactant>
    <organismsDiffer>false</organismsDiffer>
    <experiments>3</experiments>
</comment>
<comment type="interaction">
    <interactant intactId="EBI-3957138">
        <id>Q86YW9</id>
    </interactant>
    <interactant intactId="EBI-713568">
        <id>P45984</id>
        <label>MAPK9</label>
    </interactant>
    <organismsDiffer>false</organismsDiffer>
    <experiments>3</experiments>
</comment>
<comment type="interaction">
    <interactant intactId="EBI-3957138">
        <id>Q86YW9</id>
    </interactant>
    <interactant intactId="EBI-10699187">
        <id>Q8IXL7-2</id>
        <label>MSRB3</label>
    </interactant>
    <organismsDiffer>false</organismsDiffer>
    <experiments>3</experiments>
</comment>
<comment type="interaction">
    <interactant intactId="EBI-3957138">
        <id>Q86YW9</id>
    </interactant>
    <interactant intactId="EBI-11741437">
        <id>Q08117-2</id>
        <label>TLE5</label>
    </interactant>
    <organismsDiffer>false</organismsDiffer>
    <experiments>3</experiments>
</comment>
<comment type="interaction">
    <interactant intactId="EBI-3957138">
        <id>Q86YW9</id>
    </interactant>
    <interactant intactId="EBI-9090990">
        <id>Q5W5X9-3</id>
        <label>TTC23</label>
    </interactant>
    <organismsDiffer>false</organismsDiffer>
    <experiments>3</experiments>
</comment>
<comment type="subcellular location">
    <subcellularLocation>
        <location evidence="7">Nucleus</location>
    </subcellularLocation>
</comment>
<comment type="alternative products">
    <event type="alternative splicing"/>
    <isoform>
        <id>Q86YW9-1</id>
        <name>1</name>
        <sequence type="displayed"/>
    </isoform>
    <isoform>
        <id>Q86YW9-2</id>
        <name>2</name>
        <name>NOPAR</name>
        <sequence type="described" ref="VSP_029995 VSP_029996"/>
    </isoform>
    <isoform>
        <id>Q86YW9-3</id>
        <name>3</name>
        <name>NOPAR2</name>
        <sequence type="described" ref="VSP_029994 VSP_029995 VSP_029996"/>
    </isoform>
    <isoform>
        <id>Q86YW9-4</id>
        <name>4</name>
        <sequence type="described" ref="VSP_029997"/>
    </isoform>
</comment>
<comment type="disease" evidence="3 4">
    <disease id="DI-05831">
        <name>Nizon-Isidor syndrome</name>
        <acronym>NIZIDS</acronym>
        <description>An autosomal dominant neurodevelopmental disorder characterized by intellectual disability, global developmental delay, speech impairment, and behavioral abnormalities including autism spectrum disorder and aggressive behavior. Other features include a thin corpus callosum, and mild facial dysmorphism. Disease onset is in infancy or early childhood.</description>
        <dbReference type="MIM" id="618872"/>
    </disease>
    <text>The disease is caused by variants affecting the gene represented in this entry.</text>
</comment>
<comment type="similarity">
    <text evidence="7">Belongs to the Mediator complex subunit 12 family.</text>
</comment>
<comment type="sequence caution" evidence="7">
    <conflict type="miscellaneous discrepancy">
        <sequence resource="EMBL-CDS" id="AAF24035"/>
    </conflict>
    <text>Contaminating sequence. Sequence of unknown origin in the N-terminal part and potential poly-A sequence.</text>
</comment>
<comment type="sequence caution" evidence="7">
    <conflict type="erroneous initiation">
        <sequence resource="EMBL-CDS" id="BAB14198"/>
    </conflict>
</comment>
<organism>
    <name type="scientific">Homo sapiens</name>
    <name type="common">Human</name>
    <dbReference type="NCBI Taxonomy" id="9606"/>
    <lineage>
        <taxon>Eukaryota</taxon>
        <taxon>Metazoa</taxon>
        <taxon>Chordata</taxon>
        <taxon>Craniata</taxon>
        <taxon>Vertebrata</taxon>
        <taxon>Euteleostomi</taxon>
        <taxon>Mammalia</taxon>
        <taxon>Eutheria</taxon>
        <taxon>Euarchontoglires</taxon>
        <taxon>Primates</taxon>
        <taxon>Haplorrhini</taxon>
        <taxon>Catarrhini</taxon>
        <taxon>Hominidae</taxon>
        <taxon>Homo</taxon>
    </lineage>
</organism>
<protein>
    <recommendedName>
        <fullName>Mediator of RNA polymerase II transcription subunit 12-like protein</fullName>
    </recommendedName>
    <alternativeName>
        <fullName>Mediator complex subunit 12-like protein</fullName>
    </alternativeName>
    <alternativeName>
        <fullName>Thyroid hormone receptor-associated-like protein</fullName>
    </alternativeName>
    <alternativeName>
        <fullName>Trinucleotide repeat-containing gene 11 protein-like</fullName>
    </alternativeName>
</protein>
<name>MD12L_HUMAN</name>
<evidence type="ECO:0000250" key="1"/>
<evidence type="ECO:0000256" key="2">
    <source>
        <dbReference type="SAM" id="MobiDB-lite"/>
    </source>
</evidence>
<evidence type="ECO:0000269" key="3">
    <source>
    </source>
</evidence>
<evidence type="ECO:0000269" key="4">
    <source>
    </source>
</evidence>
<evidence type="ECO:0000303" key="5">
    <source>
    </source>
</evidence>
<evidence type="ECO:0000303" key="6">
    <source>
    </source>
</evidence>
<evidence type="ECO:0000305" key="7"/>
<evidence type="ECO:0007744" key="8">
    <source>
    </source>
</evidence>
<proteinExistence type="evidence at protein level"/>
<sequence>MAAFGLLSYEQRPLKRPRLGPPDVYPQDPKQKEDELTAVNVKQGFNNQPAFTGDEHGSARNIVINPSKIGAYFSSILAEKLKLNTFQDTGKKKPQVNAKDNYWLVTARSQSAIHSWFSDLAGNKPLSILAKKVPILSKKEDVFAYLAKYSVPMVRATWLIKMTCAYYSAISEAKIKKRQAPDPNLEWTQISTRYLREQLAKISDFYHMASSTGDGPVPVPPEVEQAMKQWEYNEKLAFHMFQEGMLEKHEYLTWILDVLEKIRPMDDDLLKLLLPLMLQYSDEFVQSAYLSRRLAYFCARRLSLLLSDSPNLLAAHSPHMMIGPNNSSIGAPSPGPPGPGMSPVQLAFSDFLSCAQHGPLVYGLSCMLQTVTLCCPSALVWNYSTNENKSANPGSPLDLLQVAPSSLPMPGGNTAFNQQVRARIYEVEQQIKQRGRAVEVRWSFDKCQESTAGVTISRVLHTLEVLDRHCFDRTDSSNSMETLYHKIFWANQNKDNQEVAPNDEAVVTLLCEWAVSCKRSGKHRAMAVAKLLEKRQAEIEAERCGESEVLDEKESISSSSLAGSSLPVFQNVLLRFLDTQAPSLSDPNSECEKVEFVNLVLLFCEFIRHDVFSHDAYMCTLISRGDLSVTASTRPRSPVGENADEHYSKDHDVKMEIFSPMPGESCENANTSLGRRMSVNCEKLVKREKPRELIFPSNYDLLRHLQYATHFPIPLDESSSHECNQRTILLYGVGKERDEARHQLKKITKDILKILNKKSTTETGVGDEGQKARKNKQETFPTLETVFTKLQLLSYFDQHQVTSQISNNVLEQITSFASGTSYHLPLAHHIQLIFDLMEPALNINGLIDFAIQLLNELSVVEAELLLKSSSLAGSYTTGLCVCIVAVLRRYHSCLILNPDQTAQVFEGLCGVVKHVVNPSECSSPERCILAYLYDLYVSCSHLRSKFGDLFSSACSKVKQTIYNNVMPANSNLRWDPDFMMDFIENPSARSINYSMLGKILSDNAANRYSFVCNTLMNVCMGHQDAGRINDIANFSSELTACCTVLSSEWLGVLKALCCSSNHVWGFNDVLCTVDVSDLSFHDSLATFIAILIARQCFSLEDVVQHVALPSLLAAACGDADAEPGARMTCRLLLHLFRAPQACFLPQATGKPFPGIRSSCDRHLLAAAHNSIEVGAVFAVLKAIMMLGDAKIGNNSVSSLKNDDFTMRGLRCDGNADDIWTASQNPKSCGKSISIETANLREYARYVLRTICQQEWVGEHCLKEPERLCTDKELILDPVLSNMQAQKLLQLICYPHGIKECTEGDNLQRQHIKRILQNLEQWTLRQSWLELQLMIKQCLKDPGSGSVAEMNNLLDNIAKATIEVFQQSADLNNSSNSGMSLFNPNSIGSADTSSTRQNGIKTFLSSSERRGVWLVAPLIARLPTSVQGRVLKAAGEELEKGQHLGSSSKKERDRQKQKSMSLLSQQPFLSLVLTCLKGQDEQREGLLTSLQNQVNQILSNWREERYQDDIKARQMMHEALQLRLNLVGGMFDTVQRSTQWTTDWALLLLQIITSGTVDMHTNNELFTTVLDMLGVLINGTLASDLSNASPGGSEENKRAYMNLVKKLKKELGDKRSESIDKVRQLLPLPKQTCDVITCEPMGSLIDTKGNKIAGFDSIDKKQGLQVSTKQKVSPWDLFEGQKNPAPLSWAWFGTVRVDRRVIKYEEQHHLLLYHTHPMPKPRSYYLQPLPLPPEEEEEEPTSPVSQEPERKSAELSDQGKTTTDEEKKTKGRKRKTKSSSRVDEYPQSNIYRVPPNYSPISSQMMHHPQSTLWGYNLVGQPQQPGFFLQNQSLTPGGSRLDPAGSFVPTNTKQALSNMLQRRSGAMMQPPSLHAITSQQQLIQMKLLQQQQQQRLLRQAQTRPFQQGQPGDQAALFAAQARPSPQLPQYPGLQQAQTMPQGYTMYGTQMPLQQTSQQQAGSVVLSPSYNSRAYPAAHSNPVLMERLRQIQQQPSGYVQQQASPYLQPLTGSQRLNHQALQQSPLVGGGIDAVLTSAHPNLPSVPLPQDPMRPRQPQVRQQQRLLQMQQPQQPQPQQPPQPQQSSQSQSQTLGLQAMQPQQPLFPRQGLQQTQQQQQTAALVRQLQKQLSSNQPQQGVTPYGHPSHF</sequence>
<reference key="1">
    <citation type="journal article" date="2001" name="Am. J. Hum. Genet.">
        <title>Mutations in a novel gene with transmembrane domains underlie Usher syndrome type 3.</title>
        <authorList>
            <person name="Joensuu T."/>
            <person name="Haemaelaeinen R."/>
            <person name="Yuan B."/>
            <person name="Johnson C."/>
            <person name="Tegelberg S."/>
            <person name="Gasparini P."/>
            <person name="Zelante L."/>
            <person name="Pirvola U."/>
            <person name="Pakarinen L."/>
            <person name="Lehesjoki A.-E."/>
            <person name="de la Chapelle A."/>
            <person name="Sankila E.-M."/>
        </authorList>
    </citation>
    <scope>NUCLEOTIDE SEQUENCE [MRNA] (ISOFORMS 2 AND 3)</scope>
</reference>
<reference key="2">
    <citation type="submission" date="2001-07" db="EMBL/GenBank/DDBJ databases">
        <title>Tralpush, a novel transcription-related gene, that spans the entire USHER syndrome type-3 linkage interval encloses five G-protein-coupled receptor genes nested within its introns.</title>
        <authorList>
            <person name="Adato A."/>
            <person name="Avidan N."/>
            <person name="Ben-Asher E."/>
            <person name="Khen M."/>
            <person name="Man O."/>
            <person name="Beckmann J.S."/>
            <person name="Bonne-Tamir B."/>
            <person name="Lancet D."/>
        </authorList>
    </citation>
    <scope>NUCLEOTIDE SEQUENCE [MRNA] (ISOFORM 1)</scope>
</reference>
<reference key="3">
    <citation type="submission" date="2005-09" db="EMBL/GenBank/DDBJ databases">
        <authorList>
            <person name="Mural R.J."/>
            <person name="Istrail S."/>
            <person name="Sutton G.G."/>
            <person name="Florea L."/>
            <person name="Halpern A.L."/>
            <person name="Mobarry C.M."/>
            <person name="Lippert R."/>
            <person name="Walenz B."/>
            <person name="Shatkay H."/>
            <person name="Dew I."/>
            <person name="Miller J.R."/>
            <person name="Flanigan M.J."/>
            <person name="Edwards N.J."/>
            <person name="Bolanos R."/>
            <person name="Fasulo D."/>
            <person name="Halldorsson B.V."/>
            <person name="Hannenhalli S."/>
            <person name="Turner R."/>
            <person name="Yooseph S."/>
            <person name="Lu F."/>
            <person name="Nusskern D.R."/>
            <person name="Shue B.C."/>
            <person name="Zheng X.H."/>
            <person name="Zhong F."/>
            <person name="Delcher A.L."/>
            <person name="Huson D.H."/>
            <person name="Kravitz S.A."/>
            <person name="Mouchard L."/>
            <person name="Reinert K."/>
            <person name="Remington K.A."/>
            <person name="Clark A.G."/>
            <person name="Waterman M.S."/>
            <person name="Eichler E.E."/>
            <person name="Adams M.D."/>
            <person name="Hunkapiller M.W."/>
            <person name="Myers E.W."/>
            <person name="Venter J.C."/>
        </authorList>
    </citation>
    <scope>NUCLEOTIDE SEQUENCE [LARGE SCALE GENOMIC DNA]</scope>
</reference>
<reference key="4">
    <citation type="journal article" date="2000" name="DNA Res.">
        <title>Prediction of the coding sequences of unidentified human genes. XVIII. The complete sequences of 100 new cDNA clones from brain which code for large proteins in vitro.</title>
        <authorList>
            <person name="Nagase T."/>
            <person name="Kikuno R."/>
            <person name="Nakayama M."/>
            <person name="Hirosawa M."/>
            <person name="Ohara O."/>
        </authorList>
    </citation>
    <scope>NUCLEOTIDE SEQUENCE [LARGE SCALE MRNA] OF 711-2145 (ISOFORM 1)</scope>
    <source>
        <tissue>Brain</tissue>
    </source>
</reference>
<reference key="5">
    <citation type="journal article" date="2004" name="Nat. Genet.">
        <title>Complete sequencing and characterization of 21,243 full-length human cDNAs.</title>
        <authorList>
            <person name="Ota T."/>
            <person name="Suzuki Y."/>
            <person name="Nishikawa T."/>
            <person name="Otsuki T."/>
            <person name="Sugiyama T."/>
            <person name="Irie R."/>
            <person name="Wakamatsu A."/>
            <person name="Hayashi K."/>
            <person name="Sato H."/>
            <person name="Nagai K."/>
            <person name="Kimura K."/>
            <person name="Makita H."/>
            <person name="Sekine M."/>
            <person name="Obayashi M."/>
            <person name="Nishi T."/>
            <person name="Shibahara T."/>
            <person name="Tanaka T."/>
            <person name="Ishii S."/>
            <person name="Yamamoto J."/>
            <person name="Saito K."/>
            <person name="Kawai Y."/>
            <person name="Isono Y."/>
            <person name="Nakamura Y."/>
            <person name="Nagahari K."/>
            <person name="Murakami K."/>
            <person name="Yasuda T."/>
            <person name="Iwayanagi T."/>
            <person name="Wagatsuma M."/>
            <person name="Shiratori A."/>
            <person name="Sudo H."/>
            <person name="Hosoiri T."/>
            <person name="Kaku Y."/>
            <person name="Kodaira H."/>
            <person name="Kondo H."/>
            <person name="Sugawara M."/>
            <person name="Takahashi M."/>
            <person name="Kanda K."/>
            <person name="Yokoi T."/>
            <person name="Furuya T."/>
            <person name="Kikkawa E."/>
            <person name="Omura Y."/>
            <person name="Abe K."/>
            <person name="Kamihara K."/>
            <person name="Katsuta N."/>
            <person name="Sato K."/>
            <person name="Tanikawa M."/>
            <person name="Yamazaki M."/>
            <person name="Ninomiya K."/>
            <person name="Ishibashi T."/>
            <person name="Yamashita H."/>
            <person name="Murakawa K."/>
            <person name="Fujimori K."/>
            <person name="Tanai H."/>
            <person name="Kimata M."/>
            <person name="Watanabe M."/>
            <person name="Hiraoka S."/>
            <person name="Chiba Y."/>
            <person name="Ishida S."/>
            <person name="Ono Y."/>
            <person name="Takiguchi S."/>
            <person name="Watanabe S."/>
            <person name="Yosida M."/>
            <person name="Hotuta T."/>
            <person name="Kusano J."/>
            <person name="Kanehori K."/>
            <person name="Takahashi-Fujii A."/>
            <person name="Hara H."/>
            <person name="Tanase T.-O."/>
            <person name="Nomura Y."/>
            <person name="Togiya S."/>
            <person name="Komai F."/>
            <person name="Hara R."/>
            <person name="Takeuchi K."/>
            <person name="Arita M."/>
            <person name="Imose N."/>
            <person name="Musashino K."/>
            <person name="Yuuki H."/>
            <person name="Oshima A."/>
            <person name="Sasaki N."/>
            <person name="Aotsuka S."/>
            <person name="Yoshikawa Y."/>
            <person name="Matsunawa H."/>
            <person name="Ichihara T."/>
            <person name="Shiohata N."/>
            <person name="Sano S."/>
            <person name="Moriya S."/>
            <person name="Momiyama H."/>
            <person name="Satoh N."/>
            <person name="Takami S."/>
            <person name="Terashima Y."/>
            <person name="Suzuki O."/>
            <person name="Nakagawa S."/>
            <person name="Senoh A."/>
            <person name="Mizoguchi H."/>
            <person name="Goto Y."/>
            <person name="Shimizu F."/>
            <person name="Wakebe H."/>
            <person name="Hishigaki H."/>
            <person name="Watanabe T."/>
            <person name="Sugiyama A."/>
            <person name="Takemoto M."/>
            <person name="Kawakami B."/>
            <person name="Yamazaki M."/>
            <person name="Watanabe K."/>
            <person name="Kumagai A."/>
            <person name="Itakura S."/>
            <person name="Fukuzumi Y."/>
            <person name="Fujimori Y."/>
            <person name="Komiyama M."/>
            <person name="Tashiro H."/>
            <person name="Tanigami A."/>
            <person name="Fujiwara T."/>
            <person name="Ono T."/>
            <person name="Yamada K."/>
            <person name="Fujii Y."/>
            <person name="Ozaki K."/>
            <person name="Hirao M."/>
            <person name="Ohmori Y."/>
            <person name="Kawabata A."/>
            <person name="Hikiji T."/>
            <person name="Kobatake N."/>
            <person name="Inagaki H."/>
            <person name="Ikema Y."/>
            <person name="Okamoto S."/>
            <person name="Okitani R."/>
            <person name="Kawakami T."/>
            <person name="Noguchi S."/>
            <person name="Itoh T."/>
            <person name="Shigeta K."/>
            <person name="Senba T."/>
            <person name="Matsumura K."/>
            <person name="Nakajima Y."/>
            <person name="Mizuno T."/>
            <person name="Morinaga M."/>
            <person name="Sasaki M."/>
            <person name="Togashi T."/>
            <person name="Oyama M."/>
            <person name="Hata H."/>
            <person name="Watanabe M."/>
            <person name="Komatsu T."/>
            <person name="Mizushima-Sugano J."/>
            <person name="Satoh T."/>
            <person name="Shirai Y."/>
            <person name="Takahashi Y."/>
            <person name="Nakagawa K."/>
            <person name="Okumura K."/>
            <person name="Nagase T."/>
            <person name="Nomura N."/>
            <person name="Kikuchi H."/>
            <person name="Masuho Y."/>
            <person name="Yamashita R."/>
            <person name="Nakai K."/>
            <person name="Yada T."/>
            <person name="Nakamura Y."/>
            <person name="Ohara O."/>
            <person name="Isogai T."/>
            <person name="Sugano S."/>
        </authorList>
    </citation>
    <scope>NUCLEOTIDE SEQUENCE [LARGE SCALE MRNA] OF 808-1763 (ISOFORM 4)</scope>
</reference>
<reference key="6">
    <citation type="journal article" date="2001" name="Genome Res.">
        <title>Gene expression profiling in human fetal liver and identification of tissue- and developmental-stage-specific genes through compiled expression profiles and efficient cloning of full-length cDNAs.</title>
        <authorList>
            <person name="Yu Y."/>
            <person name="Zhang C."/>
            <person name="Zhou G."/>
            <person name="Wu S."/>
            <person name="Qu X."/>
            <person name="Wei H."/>
            <person name="Xing G."/>
            <person name="Dong C."/>
            <person name="Zhai Y."/>
            <person name="Wan J."/>
            <person name="Ouyang S."/>
            <person name="Li L."/>
            <person name="Zhang S."/>
            <person name="Zhou K."/>
            <person name="Zhang Y."/>
            <person name="Wu C."/>
            <person name="He F."/>
        </authorList>
    </citation>
    <scope>NUCLEOTIDE SEQUENCE [LARGE SCALE MRNA] OF 1175-1608 (ISOFORMS 1/4)</scope>
    <source>
        <tissue>Fetal liver</tissue>
    </source>
</reference>
<reference key="7">
    <citation type="journal article" date="2008" name="Proc. Natl. Acad. Sci. U.S.A.">
        <title>A quantitative atlas of mitotic phosphorylation.</title>
        <authorList>
            <person name="Dephoure N."/>
            <person name="Zhou C."/>
            <person name="Villen J."/>
            <person name="Beausoleil S.A."/>
            <person name="Bakalarski C.E."/>
            <person name="Elledge S.J."/>
            <person name="Gygi S.P."/>
        </authorList>
    </citation>
    <scope>PHOSPHORYLATION [LARGE SCALE ANALYSIS] AT THR-462</scope>
    <scope>IDENTIFICATION BY MASS SPECTROMETRY [LARGE SCALE ANALYSIS]</scope>
    <source>
        <tissue>Cervix carcinoma</tissue>
    </source>
</reference>
<reference key="8">
    <citation type="journal article" date="2019" name="Genet. Med.">
        <title>Variants in MED12L, encoding a subunit of the mediator kinase module, are responsible for intellectual disability associated with transcriptional defect.</title>
        <authorList>
            <person name="Nizon M."/>
            <person name="Laugel V."/>
            <person name="Flanigan K.M."/>
            <person name="Pastore M."/>
            <person name="Waldrop M.A."/>
            <person name="Rosenfeld J.A."/>
            <person name="Marom R."/>
            <person name="Xiao R."/>
            <person name="Gerard A."/>
            <person name="Pichon O."/>
            <person name="Le Caignec C."/>
            <person name="Gerard M."/>
            <person name="Dieterich K."/>
            <person name="Truitt Cho M."/>
            <person name="McWalter K."/>
            <person name="Hiatt S."/>
            <person name="Thompson M.L."/>
            <person name="Bezieau S."/>
            <person name="Wadley A."/>
            <person name="Wierenga K.J."/>
            <person name="Egly J.M."/>
            <person name="Isidor B."/>
        </authorList>
    </citation>
    <scope>INVOLVEMENT IN NIZIDS</scope>
    <scope>VARIANT NIZIDS 1998-GLN--PHE-2145 DEL</scope>
</reference>
<reference key="9">
    <citation type="journal article" date="2023" name="J. Physiol. (Lond.)">
        <title>Two epilepsy-associated variants in KCNA2 (KV 1.2) at position H310 oppositely affect channel functional expression.</title>
        <authorList>
            <person name="Minguez-Vinas T."/>
            <person name="Prakash V."/>
            <person name="Wang K."/>
            <person name="Lindstroem S.H."/>
            <person name="Pozzi S."/>
            <person name="Scott S.A."/>
            <person name="Spiteri E."/>
            <person name="Stevenson D.A."/>
            <person name="Ashley E.A."/>
            <person name="Gunnarsson C."/>
            <person name="Pantazis A."/>
        </authorList>
    </citation>
    <scope>VARIANT NIZIDS 1366-GLN--PRO-1383 DEL</scope>
</reference>
<gene>
    <name type="primary">MED12L</name>
    <name type="synonym">KIAA1635</name>
    <name type="synonym">TNRC11L</name>
    <name type="synonym">TRALP</name>
    <name type="synonym">TRALPUSH</name>
    <name type="ORF">PRO0314</name>
</gene>